<sequence length="1629" mass="190461">MNFKILPIAIDLGVKNTGVFSAFYQKGTSLERLDNKNGKVYELSKDSYTLLMNNRTARRHQRRGIDRKQLVKRLFKLIWTEQLNLEWDKDTQQAISFLFNRRGFSFITDGYSPEYLNIVPEQVKAILMDIFDDYNGEDDLDSYLKLATEQESKISEIYNKLMQKILEFKLMKLCTDIKDDKVSTKTLKEITSYEFELLADYLANYSESLKTQKFSYTDKQGNLKELSYYHHDKYNIQEFLKRHATINDRILDTLLTDDLDIWNFNFEKFDFDKNEEKLQNQEDKDHIQAHLHHFVFAVNKIKSEMASGGRHRSQYFQEITNVLDENNHQEGYLKNFCENLHNKKYSNLSVKNLVNLIGNLSNLELKPLRKYFNDKIHAKADHWDEQKFTETYCHWILGEWRVGVKDQDKKDGAKYSYKDLCNELKQKVTKAGLVDFLLELDPCRTIPPYLDNNNRKPPKCQSLILNPKFLDNQYPNWQQYLQELKKLQSIQNYLDSFETDLKVLKSSKDQPYFVEYKSSNQQIASGQRDYKDLDARILQFIFDRVKASDELLLNEIYFQAKKLKQKASSELEKLESSKKLDEVIANSQLSQILKSQHTNGIFEQGTFLHLVCKYYKQRQRARDSRLYIMPEYRYDKKLHKYNNTGRFDDDNQLLTYCNHKPRQKRYQLLNDLAGVLQVSPNFLKDKIGSDDDLFISKWLVEHIRGFKKACEDSLKIQKDNRGLLNHKINIARNTKGKCEKEIFNLICKIEGSEDKKGNYKHGLAYELGVLLFGEPNEASKPEFDRKIKKFNSIYSFAQIQQIAFAERKGNANTCAVCSADNAHRMQQIKITEPVEDNKDKIILSAKAQRLPAIPTRIVDGAVKKMATILAKNIVDDNWQNIKQVLSAKHQLHIPIITESNAFEFEPALADVKGKSLKDRRKKALERISPENIFKDKNNRIKEFAKGISAYSGANLTDGDFDGAKEELDHIIPRSHKKYGTLNDEANLICVTRGDNKNKGNRIFCLRDLADNYKLKQFETTDDLEIEKKIADTIWDANKKDFKFGNYRSFINLTPQEQKAFRHALFLADENPIKQAVIRAINNRNRTFVNGTQRYFAEVLANNIYLRAKKENLNTDKISFDYFGIPTIGNGRGIAEIRQLYEKVDSDIQAYAKGDKPQASYSHLIDAMLAFCIAADEHRNDGSIGLEIDKNYSLYPLDKNTGEVFTKDIFSQIKITDNEFSDKKLVRKKAIEGFNTHRQMTRDGIYAENYLPILIHKELNEVRKGYTWKNSEEIKIFKGKKYDIQQLNNLVYCLKFVDKPISIDIQISTLEELRNILTTNNIAATAEYYYINLKTQKLHEYYIENYNTALGYKKYSKEMEFLRSLAYRSERVKIKSIDDVKQVLDKDSNFIIGKITLPFKKEWQRLYREWQNTTIKDDYEFLKSFFNVKSITKLHKKVRKDFSLPISTNEGKFLVKRKTWDNNFIYQILNDSDSRADGTKPFIPAFDISKNEIVEAIIDSFTSKNIFWLPKNIELQKVDNKNIFAIDTSKWFEVETPSDLRDIGIATIQYKIDNNSRPKVRVKLDYVIDDDSKINYFMNHSLLKSRYPDKVLEILKQSTIIEFESSGFNKTIKEMLGMKLAGIYNETSNN</sequence>
<organism>
    <name type="scientific">Francisella tularensis subsp. novicida (strain U112)</name>
    <dbReference type="NCBI Taxonomy" id="401614"/>
    <lineage>
        <taxon>Bacteria</taxon>
        <taxon>Pseudomonadati</taxon>
        <taxon>Pseudomonadota</taxon>
        <taxon>Gammaproteobacteria</taxon>
        <taxon>Thiotrichales</taxon>
        <taxon>Francisellaceae</taxon>
        <taxon>Francisella</taxon>
    </lineage>
</organism>
<reference key="1">
    <citation type="journal article" date="2007" name="Genome Biol.">
        <title>Comparison of Francisella tularensis genomes reveals evolutionary events associated with the emergence of human pathogenic strains.</title>
        <authorList>
            <person name="Rohmer L."/>
            <person name="Fong C."/>
            <person name="Abmayr S."/>
            <person name="Wasnick M."/>
            <person name="Larson Freeman T.J."/>
            <person name="Radey M."/>
            <person name="Guina T."/>
            <person name="Svensson K."/>
            <person name="Hayden H.S."/>
            <person name="Jacobs M."/>
            <person name="Gallagher L.A."/>
            <person name="Manoil C."/>
            <person name="Ernst R.K."/>
            <person name="Drees B."/>
            <person name="Buckley D."/>
            <person name="Haugen E."/>
            <person name="Bovee D."/>
            <person name="Zhou Y."/>
            <person name="Chang J."/>
            <person name="Levy R."/>
            <person name="Lim R."/>
            <person name="Gillett W."/>
            <person name="Guenthener D."/>
            <person name="Kang A."/>
            <person name="Shaffer S.A."/>
            <person name="Taylor G."/>
            <person name="Chen J."/>
            <person name="Gallis B."/>
            <person name="D'Argenio D.A."/>
            <person name="Forsman M."/>
            <person name="Olson M.V."/>
            <person name="Goodlett D.R."/>
            <person name="Kaul R."/>
            <person name="Miller S.I."/>
            <person name="Brittnacher M.J."/>
        </authorList>
    </citation>
    <scope>NUCLEOTIDE SEQUENCE [LARGE SCALE GENOMIC DNA]</scope>
    <source>
        <strain>U112</strain>
    </source>
</reference>
<reference key="2">
    <citation type="journal article" date="2013" name="Nature">
        <title>A CRISPR/Cas system mediates bacterial innate immune evasion and virulence.</title>
        <authorList>
            <person name="Sampson T.R."/>
            <person name="Saroj S.D."/>
            <person name="Llewellyn A.C."/>
            <person name="Tzeng Y.L."/>
            <person name="Weiss D.S."/>
        </authorList>
    </citation>
    <scope>FUNCTION IN REPRESSION OF ENDOGENOUS GENE EXPRESSION</scope>
    <scope>INDUCTION</scope>
    <scope>DOMAIN</scope>
    <scope>DISRUPTION PHENOTYPE</scope>
    <scope>MUTAGENESIS OF ASP-11; ARG-59; GLU-86; ARG-102; ASP-876; HIS-969; ASN-986; HIS-1162 AND ASP-1165</scope>
    <scope>RNA-BINDING</scope>
    <source>
        <strain>U112</strain>
    </source>
</reference>
<reference key="3">
    <citation type="journal article" date="2013" name="Nature">
        <authorList>
            <person name="Sampson T.R."/>
            <person name="Saroj S.D."/>
            <person name="Llewellyn A.C."/>
            <person name="Tzeng Y.L."/>
            <person name="Weiss D.S."/>
        </authorList>
    </citation>
    <scope>ERRATUM OF PUBMED:23584588</scope>
</reference>
<reference key="4">
    <citation type="journal article" date="2014" name="Nucleic Acids Res.">
        <title>Phylogeny of Cas9 determines functional exchangeability of dual-RNA and Cas9 among orthologous type II CRISPR-Cas systems.</title>
        <authorList>
            <person name="Fonfara I."/>
            <person name="Le Rhun A."/>
            <person name="Chylinski K."/>
            <person name="Makarova K.S."/>
            <person name="Lecrivain A.L."/>
            <person name="Bzdrenga J."/>
            <person name="Koonin E.V."/>
            <person name="Charpentier E."/>
        </authorList>
    </citation>
    <scope>FUNCTION AS AN ENDONUCLEASE</scope>
    <scope>POSSIBLE BIOTECHNOLOGY</scope>
    <source>
        <strain>U112</strain>
    </source>
</reference>
<reference key="5">
    <citation type="journal article" date="2023" name="Nat. Commun.">
        <title>Assessing and advancing the safety of CRISPR-Cas tools: from DNA to RNA editing.</title>
        <authorList>
            <person name="Tao J."/>
            <person name="Bauer D.E."/>
            <person name="Chiarle R."/>
        </authorList>
    </citation>
    <scope>REVIEW ON SAFETY OF GENOME EDITING TOOLS</scope>
</reference>
<reference key="6">
    <citation type="journal article" date="2016" name="Cell">
        <title>Structure and engineering of Francisella novicida Cas9.</title>
        <authorList>
            <person name="Hirano H."/>
            <person name="Gootenberg J.S."/>
            <person name="Horii T."/>
            <person name="Abudayyeh O.O."/>
            <person name="Kimura M."/>
            <person name="Hsu P.D."/>
            <person name="Nakane T."/>
            <person name="Ishitani R."/>
            <person name="Hatada I."/>
            <person name="Zhang F."/>
            <person name="Nishimasu H."/>
            <person name="Nureki O."/>
        </authorList>
    </citation>
    <scope>X-RAY CRYSTALLOGRAPHY (1.70 ANGSTROMS) IN COMPLEX WITH SGRNA; TARGET DNA AND ZINC</scope>
    <scope>FUNCTION</scope>
    <scope>DOMAIN</scope>
    <scope>BIOTECHNOLOGY IN MOUSE CELLS</scope>
    <scope>MUTAGENESIS OF ASN-995; GLU-1369; GLU-1449; SER-1473; ARG-1474; ARG-1556 AND ARG-1585</scope>
    <scope>DNA-BINDING</scope>
    <scope>RNA-BINDING</scope>
</reference>
<comment type="function">
    <text evidence="2 7 8">CRISPR (clustered regularly interspaced short palindromic repeat) is an adaptive immune system that provides protection against mobile genetic elements (viruses, transposable elements and conjugative plasmids). CRISPR clusters contain spacers, sequences complementary to antecedent mobile elements, and target invading nucleic acids. CRISPR clusters are transcribed and processed into CRISPR RNA (crRNA). In type II CRISPR systems correct processing of pre-crRNA requires a trans-encoded small RNA (tracrRNA), endogenous ribonuclease 3 (rnc) and this protein. The tracrRNA serves as a guide for ribonuclease 3-aided processing of pre-crRNA. Subsequently Cas9/crRNA/tracrRNA endonucleolytically cleaves linear or circular dsDNA target complementary to the spacer; Cas9 is inactive in the absence of the 2 guide RNAs (gRNA). Cas9 recognizes a short motif in the CRISPR repeat sequences (the PAM or protospacer adjacent motif) to help distinguish self versus nonself, as targets within the bacterial CRISPR locus do not have PAMs. PAM recognition is also required for catalytic activity. Cuts target DNA when Cas9 and gRNAs are mixed (PubMed:24270795, PubMed:26875867).</text>
</comment>
<comment type="function">
    <text evidence="6">Plays a role in repression of expression of endogenous bacterial lipoprotein FTN_1103. Cas9 plays a possibly non-enzymatic role in the degradation of FTN_1103 mRNA, which is dependent on formation of an RNA:RNA complex of tracrRNA and scaRNA (the latter is not found in all type II CRISPR-Cas systems).</text>
</comment>
<comment type="cofactor">
    <cofactor evidence="1">
        <name>Mg(2+)</name>
        <dbReference type="ChEBI" id="CHEBI:18420"/>
    </cofactor>
</comment>
<comment type="cofactor">
    <cofactor evidence="8">
        <name>Zn(2+)</name>
        <dbReference type="ChEBI" id="CHEBI:29105"/>
    </cofactor>
</comment>
<comment type="subunit">
    <text evidence="8 11">Monomer. Binds crRNA and tracrRNA.</text>
</comment>
<comment type="induction">
    <text evidence="6">In culture expression is maximal at 3 hours during mid-log phase. During infection of mouse bone marrow-derived macrophages (BMDM) expression is maximal after 1 hour, when the bacteria is expected to be in the phagosome.</text>
</comment>
<comment type="domain">
    <text evidence="6">The arginine-rich motif (ARM, residues 55-73) plays a role in regulation of at least 1 endogenous gene (FTN_1103).</text>
</comment>
<comment type="domain">
    <text evidence="8 13">Has a recognition domain (REC, residues 83-858) and a nuclease domain (NUC, residues 1-51 and 859-1629). The crRNA-target DNA twist through the domains in a different manner than in the S.pyogenes and S.aureus orthologs (PubMed:26875867). The NUC lobe has 2 endonuclease domains. The discontinuous RuvC-like domain in NUC cleaves the target DNA noncomplementary to crRNA while the HNH nuclease domain cleaves the target DNA complementary to crRNA (Probable).</text>
</comment>
<comment type="disruption phenotype">
    <text evidence="6">100-fold increase in expression of bacterial lipoprotein FTN_1103, increased stimulation of interleukin-6 (Il6) production in a Tlr2-dependent fashion by C57BL/6 mouse bone marrow-derived macrophages. In mice nearly 10(4)-fold less virulent than wild-type bacteria. A double cas9-FTN_1103 disruption significantly decreases Il6 production. Mice immunized with this gene deleted were protected against subsequent infection with wild-type bacteria.</text>
</comment>
<comment type="biotechnology">
    <text evidence="8 12">The simplicity of the Cas9-gRNAs RNA-directed DNA endonuclease activity may be used to target and modify a DNA sequence of interest (PubMed:24270795). Pre-assembled Cas9, crRNA and tracRNA induces indel formation in targeted genes upon microinjection into mouse zygotes; mutations E1369R/E1449H/R1556A alter PAM recognition and thus enlarge the scope of this protein for genetic engineering, see PDB 5B2Q for the X-ray structure of this variant. The strain deleted for this gene might make a good vaccine candiate (PubMed:26875867).</text>
</comment>
<comment type="miscellaneous">
    <text evidence="9">Part of a type II CRISPR-Cas system.</text>
</comment>
<comment type="similarity">
    <text evidence="10">Belongs to the CRISPR-associated protein Cas9 family. Subtype II-B subfamily.</text>
</comment>
<proteinExistence type="evidence at protein level"/>
<feature type="chain" id="PRO_0000429984" description="CRISPR-associated endonuclease Cas9">
    <location>
        <begin position="1"/>
        <end position="1629"/>
    </location>
</feature>
<feature type="domain" description="HNH Cas9-type" evidence="4">
    <location>
        <begin position="897"/>
        <end position="1046"/>
    </location>
</feature>
<feature type="region of interest" description="RuvC-I" evidence="13">
    <location>
        <begin position="1"/>
        <end position="51"/>
    </location>
</feature>
<feature type="region of interest" description="ARM" evidence="9">
    <location>
        <begin position="55"/>
        <end position="73"/>
    </location>
</feature>
<feature type="region of interest" description="Recognition domain (REC)" evidence="13">
    <location>
        <begin position="83"/>
        <end position="858"/>
    </location>
</feature>
<feature type="region of interest" description="RuvC-II" evidence="13">
    <location>
        <begin position="858"/>
        <end position="899"/>
    </location>
</feature>
<feature type="region of interest" description="RuvC-III" evidence="13">
    <location>
        <begin position="1088"/>
        <end position="1224"/>
    </location>
</feature>
<feature type="region of interest" description="PAM-interacting domain (PI)" evidence="13">
    <location>
        <begin position="1476"/>
        <end position="1629"/>
    </location>
</feature>
<feature type="coiled-coil region" evidence="3">
    <location>
        <begin position="555"/>
        <end position="582"/>
    </location>
</feature>
<feature type="short sequence motif" description="PAM-binding" evidence="8">
    <location>
        <begin position="1473"/>
        <end position="1474"/>
    </location>
</feature>
<feature type="active site" description="For RuvC-like nuclease domain" evidence="13">
    <location>
        <position position="11"/>
    </location>
</feature>
<feature type="active site" description="Proton acceptor for HNH nuclease domain" evidence="13">
    <location>
        <position position="995"/>
    </location>
</feature>
<feature type="binding site" evidence="2">
    <location>
        <position position="11"/>
    </location>
    <ligand>
        <name>Mn(2+)</name>
        <dbReference type="ChEBI" id="CHEBI:29035"/>
        <label>1</label>
    </ligand>
</feature>
<feature type="binding site" evidence="2">
    <location>
        <position position="11"/>
    </location>
    <ligand>
        <name>Mn(2+)</name>
        <dbReference type="ChEBI" id="CHEBI:29035"/>
        <label>2</label>
    </ligand>
</feature>
<feature type="binding site" evidence="5">
    <location>
        <position position="460"/>
    </location>
    <ligand>
        <name>Zn(2+)</name>
        <dbReference type="ChEBI" id="CHEBI:29105"/>
    </ligand>
</feature>
<feature type="binding site" evidence="5">
    <location>
        <position position="657"/>
    </location>
    <ligand>
        <name>Zn(2+)</name>
        <dbReference type="ChEBI" id="CHEBI:29105"/>
    </ligand>
</feature>
<feature type="binding site" evidence="5">
    <location>
        <position position="814"/>
    </location>
    <ligand>
        <name>Zn(2+)</name>
        <dbReference type="ChEBI" id="CHEBI:29105"/>
    </ligand>
</feature>
<feature type="binding site" evidence="5">
    <location>
        <position position="817"/>
    </location>
    <ligand>
        <name>Zn(2+)</name>
        <dbReference type="ChEBI" id="CHEBI:29105"/>
    </ligand>
</feature>
<feature type="binding site" evidence="2">
    <location>
        <position position="876"/>
    </location>
    <ligand>
        <name>Mg(2+)</name>
        <dbReference type="ChEBI" id="CHEBI:18420"/>
        <label>1</label>
    </ligand>
</feature>
<feature type="binding site" evidence="2">
    <location>
        <position position="880"/>
    </location>
    <ligand>
        <name>Mg(2+)</name>
        <dbReference type="ChEBI" id="CHEBI:18420"/>
        <label>1</label>
    </ligand>
</feature>
<feature type="binding site" evidence="2">
    <location>
        <position position="880"/>
    </location>
    <ligand>
        <name>Mg(2+)</name>
        <dbReference type="ChEBI" id="CHEBI:18420"/>
        <label>2</label>
    </ligand>
</feature>
<feature type="binding site" evidence="2">
    <location>
        <position position="1162"/>
    </location>
    <ligand>
        <name>Mn(2+)</name>
        <dbReference type="ChEBI" id="CHEBI:29035"/>
        <label>2</label>
    </ligand>
</feature>
<feature type="binding site" evidence="8">
    <location>
        <position position="1556"/>
    </location>
    <ligand>
        <name>RNA</name>
        <dbReference type="ChEBI" id="CHEBI:33697"/>
    </ligand>
    <ligandPart>
        <name>PAM RNA</name>
    </ligandPart>
</feature>
<feature type="binding site" evidence="8">
    <location>
        <position position="1585"/>
    </location>
    <ligand>
        <name>RNA</name>
        <dbReference type="ChEBI" id="CHEBI:33697"/>
    </ligand>
    <ligandPart>
        <name>PAM RNA</name>
    </ligandPart>
</feature>
<feature type="mutagenesis site" description="Still represses expression of lipoprotein FTN_1103." evidence="6">
    <original>D</original>
    <variation>A</variation>
    <location>
        <position position="11"/>
    </location>
</feature>
<feature type="mutagenesis site" description="No longer represses expression of lipoprotein FTN_1103, Cas9 no longer binds mRNA for FTN_1103, tracrRNA or scaRNA." evidence="6">
    <original>R</original>
    <variation>A</variation>
    <location>
        <position position="59"/>
    </location>
</feature>
<feature type="mutagenesis site" description="Still represses expression of lipoprotein FTN_1103." evidence="6">
    <original>E</original>
    <variation>A</variation>
    <location>
        <position position="86"/>
    </location>
</feature>
<feature type="mutagenesis site" description="Still represses expression of lipoprotein FTN_1103." evidence="6">
    <original>R</original>
    <variation>A</variation>
    <location>
        <position position="102"/>
    </location>
</feature>
<feature type="mutagenesis site" description="Still represses expression of lipoprotein FTN_1103." evidence="6">
    <original>D</original>
    <variation>A</variation>
    <location>
        <position position="876"/>
    </location>
</feature>
<feature type="mutagenesis site" description="Still represses expression of lipoprotein FTN_1103." evidence="6">
    <original>H</original>
    <variation>A</variation>
    <location>
        <position position="969"/>
    </location>
</feature>
<feature type="mutagenesis site" description="Still represses expression of lipoprotein FTN_1103." evidence="6">
    <original>N</original>
    <variation>A</variation>
    <location>
        <position position="986"/>
    </location>
</feature>
<feature type="mutagenesis site" description="Target DNA not cleaved." evidence="8">
    <original>N</original>
    <variation>A</variation>
    <location>
        <position position="995"/>
    </location>
</feature>
<feature type="mutagenesis site" description="Still represses expression of lipoprotein FTN_1103." evidence="6">
    <original>H</original>
    <variation>A</variation>
    <location>
        <position position="1162"/>
    </location>
</feature>
<feature type="mutagenesis site" description="Still represses expression of lipoprotein FTN_1103." evidence="6">
    <original>D</original>
    <variation>A</variation>
    <location>
        <position position="1165"/>
    </location>
</feature>
<feature type="mutagenesis site" description="Recognizes and cleaves altered PAM; when associated with H-1449 and A-1556." evidence="8">
    <original>E</original>
    <variation>R</variation>
    <location>
        <position position="1369"/>
    </location>
</feature>
<feature type="mutagenesis site" description="Recognizes and cleaves altered PAM; when associated with R-1369 and A-1556." evidence="8">
    <original>E</original>
    <variation>H</variation>
    <location>
        <position position="1449"/>
    </location>
</feature>
<feature type="mutagenesis site" description="Decreased target DNA cleavage." evidence="8">
    <original>S</original>
    <variation>A</variation>
    <location>
        <position position="1473"/>
    </location>
</feature>
<feature type="mutagenesis site" description="Target DNA not cleaved." evidence="8">
    <original>R</original>
    <variation>A</variation>
    <location>
        <position position="1474"/>
    </location>
</feature>
<feature type="mutagenesis site" description="Almost no target DNA cleavage, recognizes and partially cleaves altered PAM. Improved cleavage of altered PAM; when associated with R-1369 and H-1449." evidence="8">
    <original>R</original>
    <variation>A</variation>
    <location>
        <position position="1556"/>
    </location>
</feature>
<feature type="mutagenesis site" description="Target DNA not cleaved." evidence="8">
    <original>R</original>
    <variation>A</variation>
    <location>
        <position position="1585"/>
    </location>
</feature>
<feature type="strand" evidence="14">
    <location>
        <begin position="3"/>
        <end position="5"/>
    </location>
</feature>
<feature type="strand" evidence="14">
    <location>
        <begin position="8"/>
        <end position="12"/>
    </location>
</feature>
<feature type="strand" evidence="14">
    <location>
        <begin position="14"/>
        <end position="22"/>
    </location>
</feature>
<feature type="helix" evidence="14">
    <location>
        <begin position="30"/>
        <end position="32"/>
    </location>
</feature>
<feature type="strand" evidence="14">
    <location>
        <begin position="36"/>
        <end position="43"/>
    </location>
</feature>
<feature type="turn" evidence="14">
    <location>
        <begin position="45"/>
        <end position="47"/>
    </location>
</feature>
<feature type="helix" evidence="14">
    <location>
        <begin position="53"/>
        <end position="81"/>
    </location>
</feature>
<feature type="helix" evidence="14">
    <location>
        <begin position="89"/>
        <end position="99"/>
    </location>
</feature>
<feature type="helix" evidence="14">
    <location>
        <begin position="124"/>
        <end position="133"/>
    </location>
</feature>
<feature type="helix" evidence="14">
    <location>
        <begin position="142"/>
        <end position="147"/>
    </location>
</feature>
<feature type="helix" evidence="14">
    <location>
        <begin position="151"/>
        <end position="179"/>
    </location>
</feature>
<feature type="helix" evidence="14">
    <location>
        <begin position="192"/>
        <end position="197"/>
    </location>
</feature>
<feature type="helix" evidence="14">
    <location>
        <begin position="199"/>
        <end position="202"/>
    </location>
</feature>
<feature type="helix" evidence="14">
    <location>
        <begin position="203"/>
        <end position="205"/>
    </location>
</feature>
<feature type="helix" evidence="14">
    <location>
        <begin position="206"/>
        <end position="211"/>
    </location>
</feature>
<feature type="helix" evidence="14">
    <location>
        <begin position="236"/>
        <end position="241"/>
    </location>
</feature>
<feature type="helix" evidence="14">
    <location>
        <begin position="244"/>
        <end position="254"/>
    </location>
</feature>
<feature type="helix" evidence="14">
    <location>
        <begin position="260"/>
        <end position="262"/>
    </location>
</feature>
<feature type="helix" evidence="14">
    <location>
        <begin position="293"/>
        <end position="307"/>
    </location>
</feature>
<feature type="helix" evidence="14">
    <location>
        <begin position="312"/>
        <end position="324"/>
    </location>
</feature>
<feature type="helix" evidence="14">
    <location>
        <begin position="331"/>
        <end position="341"/>
    </location>
</feature>
<feature type="turn" evidence="14">
    <location>
        <begin position="342"/>
        <end position="347"/>
    </location>
</feature>
<feature type="helix" evidence="14">
    <location>
        <begin position="350"/>
        <end position="361"/>
    </location>
</feature>
<feature type="helix" evidence="14">
    <location>
        <begin position="365"/>
        <end position="372"/>
    </location>
</feature>
<feature type="helix" evidence="14">
    <location>
        <begin position="375"/>
        <end position="377"/>
    </location>
</feature>
<feature type="strand" evidence="15">
    <location>
        <begin position="378"/>
        <end position="380"/>
    </location>
</feature>
<feature type="helix" evidence="14">
    <location>
        <begin position="385"/>
        <end position="398"/>
    </location>
</feature>
<feature type="helix" evidence="14">
    <location>
        <begin position="407"/>
        <end position="409"/>
    </location>
</feature>
<feature type="helix" evidence="14">
    <location>
        <begin position="417"/>
        <end position="427"/>
    </location>
</feature>
<feature type="turn" evidence="14">
    <location>
        <begin position="428"/>
        <end position="430"/>
    </location>
</feature>
<feature type="helix" evidence="14">
    <location>
        <begin position="433"/>
        <end position="437"/>
    </location>
</feature>
<feature type="helix" evidence="14">
    <location>
        <begin position="442"/>
        <end position="445"/>
    </location>
</feature>
<feature type="strand" evidence="15">
    <location>
        <begin position="454"/>
        <end position="456"/>
    </location>
</feature>
<feature type="strand" evidence="14">
    <location>
        <begin position="462"/>
        <end position="465"/>
    </location>
</feature>
<feature type="helix" evidence="14">
    <location>
        <begin position="467"/>
        <end position="473"/>
    </location>
</feature>
<feature type="helix" evidence="14">
    <location>
        <begin position="477"/>
        <end position="485"/>
    </location>
</feature>
<feature type="helix" evidence="14">
    <location>
        <begin position="488"/>
        <end position="494"/>
    </location>
</feature>
<feature type="helix" evidence="14">
    <location>
        <begin position="497"/>
        <end position="503"/>
    </location>
</feature>
<feature type="strand" evidence="14">
    <location>
        <begin position="511"/>
        <end position="516"/>
    </location>
</feature>
<feature type="helix" evidence="14">
    <location>
        <begin position="521"/>
        <end position="524"/>
    </location>
</feature>
<feature type="helix" evidence="14">
    <location>
        <begin position="530"/>
        <end position="542"/>
    </location>
</feature>
<feature type="helix" evidence="14">
    <location>
        <begin position="546"/>
        <end position="548"/>
    </location>
</feature>
<feature type="helix" evidence="14">
    <location>
        <begin position="553"/>
        <end position="564"/>
    </location>
</feature>
<feature type="helix" evidence="14">
    <location>
        <begin position="578"/>
        <end position="586"/>
    </location>
</feature>
<feature type="helix" evidence="14">
    <location>
        <begin position="591"/>
        <end position="593"/>
    </location>
</feature>
<feature type="helix" evidence="14">
    <location>
        <begin position="607"/>
        <end position="622"/>
    </location>
</feature>
<feature type="strand" evidence="14">
    <location>
        <begin position="629"/>
        <end position="635"/>
    </location>
</feature>
<feature type="turn" evidence="14">
    <location>
        <begin position="636"/>
        <end position="639"/>
    </location>
</feature>
<feature type="strand" evidence="14">
    <location>
        <begin position="640"/>
        <end position="648"/>
    </location>
</feature>
<feature type="strand" evidence="14">
    <location>
        <begin position="653"/>
        <end position="656"/>
    </location>
</feature>
<feature type="helix" evidence="14">
    <location>
        <begin position="664"/>
        <end position="666"/>
    </location>
</feature>
<feature type="helix" evidence="14">
    <location>
        <begin position="668"/>
        <end position="676"/>
    </location>
</feature>
<feature type="helix" evidence="14">
    <location>
        <begin position="680"/>
        <end position="687"/>
    </location>
</feature>
<feature type="helix" evidence="14">
    <location>
        <begin position="692"/>
        <end position="702"/>
    </location>
</feature>
<feature type="helix" evidence="14">
    <location>
        <begin position="706"/>
        <end position="719"/>
    </location>
</feature>
<feature type="strand" evidence="14">
    <location>
        <begin position="720"/>
        <end position="722"/>
    </location>
</feature>
<feature type="helix" evidence="14">
    <location>
        <begin position="724"/>
        <end position="734"/>
    </location>
</feature>
<feature type="strand" evidence="14">
    <location>
        <begin position="737"/>
        <end position="739"/>
    </location>
</feature>
<feature type="helix" evidence="14">
    <location>
        <begin position="740"/>
        <end position="750"/>
    </location>
</feature>
<feature type="helix" evidence="14">
    <location>
        <begin position="763"/>
        <end position="772"/>
    </location>
</feature>
<feature type="turn" evidence="14">
    <location>
        <begin position="777"/>
        <end position="779"/>
    </location>
</feature>
<feature type="helix" evidence="14">
    <location>
        <begin position="780"/>
        <end position="787"/>
    </location>
</feature>
<feature type="helix" evidence="14">
    <location>
        <begin position="788"/>
        <end position="790"/>
    </location>
</feature>
<feature type="helix" evidence="14">
    <location>
        <begin position="793"/>
        <end position="803"/>
    </location>
</feature>
<feature type="helix" evidence="14">
    <location>
        <begin position="815"/>
        <end position="824"/>
    </location>
</feature>
<feature type="strand" evidence="14">
    <location>
        <begin position="827"/>
        <end position="829"/>
    </location>
</feature>
<feature type="strand" evidence="14">
    <location>
        <begin position="843"/>
        <end position="847"/>
    </location>
</feature>
<feature type="helix" evidence="14">
    <location>
        <begin position="860"/>
        <end position="886"/>
    </location>
</feature>
<feature type="strand" evidence="14">
    <location>
        <begin position="890"/>
        <end position="899"/>
    </location>
</feature>
<feature type="helix" evidence="14">
    <location>
        <begin position="901"/>
        <end position="911"/>
    </location>
</feature>
<feature type="helix" evidence="14">
    <location>
        <begin position="918"/>
        <end position="926"/>
    </location>
</feature>
<feature type="turn" evidence="14">
    <location>
        <begin position="929"/>
        <end position="933"/>
    </location>
</feature>
<feature type="helix" evidence="14">
    <location>
        <begin position="934"/>
        <end position="942"/>
    </location>
</feature>
<feature type="strand" evidence="14">
    <location>
        <begin position="966"/>
        <end position="971"/>
    </location>
</feature>
<feature type="helix" evidence="14">
    <location>
        <begin position="984"/>
        <end position="986"/>
    </location>
</feature>
<feature type="strand" evidence="14">
    <location>
        <begin position="987"/>
        <end position="990"/>
    </location>
</feature>
<feature type="helix" evidence="15">
    <location>
        <begin position="1049"/>
        <end position="1051"/>
    </location>
</feature>
<feature type="helix" evidence="14">
    <location>
        <begin position="1054"/>
        <end position="1062"/>
    </location>
</feature>
<feature type="helix" evidence="14">
    <location>
        <begin position="1063"/>
        <end position="1065"/>
    </location>
</feature>
<feature type="helix" evidence="14">
    <location>
        <begin position="1071"/>
        <end position="1082"/>
    </location>
</feature>
<feature type="helix" evidence="14">
    <location>
        <begin position="1090"/>
        <end position="1109"/>
    </location>
</feature>
<feature type="strand" evidence="14">
    <location>
        <begin position="1117"/>
        <end position="1123"/>
    </location>
</feature>
<feature type="strand" evidence="14">
    <location>
        <begin position="1126"/>
        <end position="1128"/>
    </location>
</feature>
<feature type="helix" evidence="14">
    <location>
        <begin position="1133"/>
        <end position="1143"/>
    </location>
</feature>
<feature type="helix" evidence="14">
    <location>
        <begin position="1145"/>
        <end position="1148"/>
    </location>
</feature>
<feature type="strand" evidence="15">
    <location>
        <begin position="1153"/>
        <end position="1155"/>
    </location>
</feature>
<feature type="helix" evidence="14">
    <location>
        <begin position="1159"/>
        <end position="1176"/>
    </location>
</feature>
<feature type="strand" evidence="14">
    <location>
        <begin position="1178"/>
        <end position="1183"/>
    </location>
</feature>
<feature type="helix" evidence="14">
    <location>
        <begin position="1208"/>
        <end position="1212"/>
    </location>
</feature>
<feature type="turn" evidence="14">
    <location>
        <begin position="1216"/>
        <end position="1218"/>
    </location>
</feature>
<feature type="strand" evidence="14">
    <location>
        <begin position="1220"/>
        <end position="1224"/>
    </location>
</feature>
<feature type="strand" evidence="14">
    <location>
        <begin position="1240"/>
        <end position="1249"/>
    </location>
</feature>
<feature type="strand" evidence="14">
    <location>
        <begin position="1252"/>
        <end position="1259"/>
    </location>
</feature>
<feature type="strand" evidence="14">
    <location>
        <begin position="1261"/>
        <end position="1273"/>
    </location>
</feature>
<feature type="helix" evidence="14">
    <location>
        <begin position="1283"/>
        <end position="1291"/>
    </location>
</feature>
<feature type="helix" evidence="14">
    <location>
        <begin position="1292"/>
        <end position="1295"/>
    </location>
</feature>
<feature type="strand" evidence="14">
    <location>
        <begin position="1296"/>
        <end position="1298"/>
    </location>
</feature>
<feature type="helix" evidence="14">
    <location>
        <begin position="1309"/>
        <end position="1318"/>
    </location>
</feature>
<feature type="strand" evidence="14">
    <location>
        <begin position="1325"/>
        <end position="1330"/>
    </location>
</feature>
<feature type="helix" evidence="14">
    <location>
        <begin position="1334"/>
        <end position="1345"/>
    </location>
</feature>
<feature type="helix" evidence="14">
    <location>
        <begin position="1347"/>
        <end position="1349"/>
    </location>
</feature>
<feature type="helix" evidence="14">
    <location>
        <begin position="1356"/>
        <end position="1363"/>
    </location>
</feature>
<feature type="strand" evidence="14">
    <location>
        <begin position="1365"/>
        <end position="1373"/>
    </location>
</feature>
<feature type="helix" evidence="14">
    <location>
        <begin position="1376"/>
        <end position="1384"/>
    </location>
</feature>
<feature type="helix" evidence="14">
    <location>
        <begin position="1386"/>
        <end position="1388"/>
    </location>
</feature>
<feature type="helix" evidence="14">
    <location>
        <begin position="1399"/>
        <end position="1411"/>
    </location>
</feature>
<feature type="helix" evidence="14">
    <location>
        <begin position="1417"/>
        <end position="1424"/>
    </location>
</feature>
<feature type="strand" evidence="14">
    <location>
        <begin position="1441"/>
        <end position="1447"/>
    </location>
</feature>
<feature type="strand" evidence="14">
    <location>
        <begin position="1452"/>
        <end position="1457"/>
    </location>
</feature>
<feature type="strand" evidence="14">
    <location>
        <begin position="1463"/>
        <end position="1470"/>
    </location>
</feature>
<feature type="turn" evidence="14">
    <location>
        <begin position="1473"/>
        <end position="1476"/>
    </location>
</feature>
<feature type="strand" evidence="14">
    <location>
        <begin position="1480"/>
        <end position="1486"/>
    </location>
</feature>
<feature type="turn" evidence="14">
    <location>
        <begin position="1487"/>
        <end position="1490"/>
    </location>
</feature>
<feature type="strand" evidence="14">
    <location>
        <begin position="1491"/>
        <end position="1496"/>
    </location>
</feature>
<feature type="helix" evidence="14">
    <location>
        <begin position="1498"/>
        <end position="1500"/>
    </location>
</feature>
<feature type="strand" evidence="14">
    <location>
        <begin position="1505"/>
        <end position="1507"/>
    </location>
</feature>
<feature type="strand" evidence="14">
    <location>
        <begin position="1519"/>
        <end position="1524"/>
    </location>
</feature>
<feature type="strand" evidence="14">
    <location>
        <begin position="1530"/>
        <end position="1533"/>
    </location>
</feature>
<feature type="helix" evidence="14">
    <location>
        <begin position="1537"/>
        <end position="1540"/>
    </location>
</feature>
<feature type="turn" evidence="14">
    <location>
        <begin position="1541"/>
        <end position="1543"/>
    </location>
</feature>
<feature type="strand" evidence="14">
    <location>
        <begin position="1544"/>
        <end position="1550"/>
    </location>
</feature>
<feature type="strand" evidence="14">
    <location>
        <begin position="1553"/>
        <end position="1555"/>
    </location>
</feature>
<feature type="strand" evidence="14">
    <location>
        <begin position="1558"/>
        <end position="1565"/>
    </location>
</feature>
<feature type="helix" evidence="14">
    <location>
        <begin position="1570"/>
        <end position="1578"/>
    </location>
</feature>
<feature type="turn" evidence="14">
    <location>
        <begin position="1580"/>
        <end position="1582"/>
    </location>
</feature>
<feature type="strand" evidence="14">
    <location>
        <begin position="1584"/>
        <end position="1586"/>
    </location>
</feature>
<feature type="helix" evidence="14">
    <location>
        <begin position="1587"/>
        <end position="1594"/>
    </location>
</feature>
<feature type="strand" evidence="14">
    <location>
        <begin position="1598"/>
        <end position="1605"/>
    </location>
</feature>
<feature type="helix" evidence="14">
    <location>
        <begin position="1609"/>
        <end position="1621"/>
    </location>
</feature>
<protein>
    <recommendedName>
        <fullName>CRISPR-associated endonuclease Cas9</fullName>
        <ecNumber>3.1.-.-</ecNumber>
    </recommendedName>
</protein>
<accession>A0Q5Y3</accession>
<evidence type="ECO:0000250" key="1"/>
<evidence type="ECO:0000250" key="2">
    <source>
        <dbReference type="UniProtKB" id="Q99ZW2"/>
    </source>
</evidence>
<evidence type="ECO:0000255" key="3"/>
<evidence type="ECO:0000255" key="4">
    <source>
        <dbReference type="PROSITE-ProRule" id="PRU01085"/>
    </source>
</evidence>
<evidence type="ECO:0000269" key="5">
    <source>
    </source>
</evidence>
<evidence type="ECO:0000269" key="6">
    <source>
    </source>
</evidence>
<evidence type="ECO:0000269" key="7">
    <source>
    </source>
</evidence>
<evidence type="ECO:0000269" key="8">
    <source>
    </source>
</evidence>
<evidence type="ECO:0000303" key="9">
    <source>
    </source>
</evidence>
<evidence type="ECO:0000305" key="10"/>
<evidence type="ECO:0000305" key="11">
    <source>
    </source>
</evidence>
<evidence type="ECO:0000305" key="12">
    <source>
    </source>
</evidence>
<evidence type="ECO:0000305" key="13">
    <source>
    </source>
</evidence>
<evidence type="ECO:0007829" key="14">
    <source>
        <dbReference type="PDB" id="5B2O"/>
    </source>
</evidence>
<evidence type="ECO:0007829" key="15">
    <source>
        <dbReference type="PDB" id="5B2P"/>
    </source>
</evidence>
<gene>
    <name type="primary">cas9</name>
    <name type="ordered locus">FTN_0757</name>
</gene>
<keyword id="KW-0002">3D-structure</keyword>
<keyword id="KW-0051">Antiviral defense</keyword>
<keyword id="KW-0175">Coiled coil</keyword>
<keyword id="KW-0238">DNA-binding</keyword>
<keyword id="KW-0255">Endonuclease</keyword>
<keyword id="KW-0378">Hydrolase</keyword>
<keyword id="KW-0460">Magnesium</keyword>
<keyword id="KW-0464">Manganese</keyword>
<keyword id="KW-0479">Metal-binding</keyword>
<keyword id="KW-0540">Nuclease</keyword>
<keyword id="KW-0694">RNA-binding</keyword>
<keyword id="KW-0843">Virulence</keyword>
<keyword id="KW-0862">Zinc</keyword>
<name>CAS9_FRATN</name>
<dbReference type="EC" id="3.1.-.-"/>
<dbReference type="EMBL" id="CP000439">
    <property type="protein sequence ID" value="ABK89648.1"/>
    <property type="molecule type" value="Genomic_DNA"/>
</dbReference>
<dbReference type="RefSeq" id="WP_003038941.1">
    <property type="nucleotide sequence ID" value="NC_008601.1"/>
</dbReference>
<dbReference type="PDB" id="5B2O">
    <property type="method" value="X-ray"/>
    <property type="resolution" value="1.70 A"/>
    <property type="chains" value="A=1-1629"/>
</dbReference>
<dbReference type="PDB" id="5B2P">
    <property type="method" value="X-ray"/>
    <property type="resolution" value="1.70 A"/>
    <property type="chains" value="A=1-1629"/>
</dbReference>
<dbReference type="PDB" id="5B2Q">
    <property type="method" value="X-ray"/>
    <property type="resolution" value="1.70 A"/>
    <property type="chains" value="A=1-1629"/>
</dbReference>
<dbReference type="PDB" id="6J9L">
    <property type="method" value="X-ray"/>
    <property type="resolution" value="1.78 A"/>
    <property type="chains" value="E=44-90"/>
</dbReference>
<dbReference type="PDBsum" id="5B2O"/>
<dbReference type="PDBsum" id="5B2P"/>
<dbReference type="PDBsum" id="5B2Q"/>
<dbReference type="PDBsum" id="6J9L"/>
<dbReference type="SMR" id="A0Q5Y3"/>
<dbReference type="KEGG" id="ftn:FTN_0757"/>
<dbReference type="KEGG" id="ftx:AW25_1264"/>
<dbReference type="BioCyc" id="FTUL401614:G1G75-789-MONOMER"/>
<dbReference type="EvolutionaryTrace" id="A0Q5Y3"/>
<dbReference type="PHI-base" id="PHI:3358"/>
<dbReference type="Proteomes" id="UP000000762">
    <property type="component" value="Chromosome"/>
</dbReference>
<dbReference type="GO" id="GO:0003677">
    <property type="term" value="F:DNA binding"/>
    <property type="evidence" value="ECO:0007669"/>
    <property type="project" value="UniProtKB-KW"/>
</dbReference>
<dbReference type="GO" id="GO:0004519">
    <property type="term" value="F:endonuclease activity"/>
    <property type="evidence" value="ECO:0007669"/>
    <property type="project" value="UniProtKB-KW"/>
</dbReference>
<dbReference type="GO" id="GO:0046872">
    <property type="term" value="F:metal ion binding"/>
    <property type="evidence" value="ECO:0007669"/>
    <property type="project" value="UniProtKB-KW"/>
</dbReference>
<dbReference type="GO" id="GO:0003723">
    <property type="term" value="F:RNA binding"/>
    <property type="evidence" value="ECO:0007669"/>
    <property type="project" value="UniProtKB-KW"/>
</dbReference>
<dbReference type="GO" id="GO:0051607">
    <property type="term" value="P:defense response to virus"/>
    <property type="evidence" value="ECO:0007669"/>
    <property type="project" value="UniProtKB-KW"/>
</dbReference>
<dbReference type="Gene3D" id="1.10.30.50">
    <property type="match status" value="1"/>
</dbReference>
<dbReference type="InterPro" id="IPR055027">
    <property type="entry name" value="Cas9_C_2"/>
</dbReference>
<dbReference type="InterPro" id="IPR049465">
    <property type="entry name" value="Cas9_lobe"/>
</dbReference>
<dbReference type="InterPro" id="IPR013492">
    <property type="entry name" value="CRISPR-assoc_Cas9/Csx12"/>
</dbReference>
<dbReference type="InterPro" id="IPR033114">
    <property type="entry name" value="HNH_CAS9"/>
</dbReference>
<dbReference type="NCBIfam" id="TIGR03031">
    <property type="entry name" value="cas_csx12"/>
    <property type="match status" value="1"/>
</dbReference>
<dbReference type="Pfam" id="PF22385">
    <property type="entry name" value="Cas9_C_2"/>
    <property type="match status" value="1"/>
</dbReference>
<dbReference type="Pfam" id="PF21069">
    <property type="entry name" value="Csx12"/>
    <property type="match status" value="1"/>
</dbReference>
<dbReference type="PROSITE" id="PS51749">
    <property type="entry name" value="HNH_CAS9"/>
    <property type="match status" value="1"/>
</dbReference>